<feature type="chain" id="PRO_0000294763" description="Small ribosomal subunit protein uS11">
    <location>
        <begin position="1"/>
        <end position="129"/>
    </location>
</feature>
<gene>
    <name evidence="1" type="primary">rpsK</name>
    <name type="ordered locus">GTNG_0130</name>
</gene>
<dbReference type="EMBL" id="CP000557">
    <property type="protein sequence ID" value="ABO65517.1"/>
    <property type="molecule type" value="Genomic_DNA"/>
</dbReference>
<dbReference type="RefSeq" id="WP_008881919.1">
    <property type="nucleotide sequence ID" value="NC_009328.1"/>
</dbReference>
<dbReference type="SMR" id="A4IJL3"/>
<dbReference type="GeneID" id="87622300"/>
<dbReference type="KEGG" id="gtn:GTNG_0130"/>
<dbReference type="eggNOG" id="COG0100">
    <property type="taxonomic scope" value="Bacteria"/>
</dbReference>
<dbReference type="HOGENOM" id="CLU_072439_5_0_9"/>
<dbReference type="Proteomes" id="UP000001578">
    <property type="component" value="Chromosome"/>
</dbReference>
<dbReference type="GO" id="GO:1990904">
    <property type="term" value="C:ribonucleoprotein complex"/>
    <property type="evidence" value="ECO:0007669"/>
    <property type="project" value="UniProtKB-KW"/>
</dbReference>
<dbReference type="GO" id="GO:0005840">
    <property type="term" value="C:ribosome"/>
    <property type="evidence" value="ECO:0007669"/>
    <property type="project" value="UniProtKB-KW"/>
</dbReference>
<dbReference type="GO" id="GO:0019843">
    <property type="term" value="F:rRNA binding"/>
    <property type="evidence" value="ECO:0007669"/>
    <property type="project" value="UniProtKB-UniRule"/>
</dbReference>
<dbReference type="GO" id="GO:0003735">
    <property type="term" value="F:structural constituent of ribosome"/>
    <property type="evidence" value="ECO:0007669"/>
    <property type="project" value="InterPro"/>
</dbReference>
<dbReference type="GO" id="GO:0006412">
    <property type="term" value="P:translation"/>
    <property type="evidence" value="ECO:0007669"/>
    <property type="project" value="UniProtKB-UniRule"/>
</dbReference>
<dbReference type="FunFam" id="3.30.420.80:FF:000001">
    <property type="entry name" value="30S ribosomal protein S11"/>
    <property type="match status" value="1"/>
</dbReference>
<dbReference type="Gene3D" id="3.30.420.80">
    <property type="entry name" value="Ribosomal protein S11"/>
    <property type="match status" value="1"/>
</dbReference>
<dbReference type="HAMAP" id="MF_01310">
    <property type="entry name" value="Ribosomal_uS11"/>
    <property type="match status" value="1"/>
</dbReference>
<dbReference type="InterPro" id="IPR001971">
    <property type="entry name" value="Ribosomal_uS11"/>
</dbReference>
<dbReference type="InterPro" id="IPR019981">
    <property type="entry name" value="Ribosomal_uS11_bac-type"/>
</dbReference>
<dbReference type="InterPro" id="IPR018102">
    <property type="entry name" value="Ribosomal_uS11_CS"/>
</dbReference>
<dbReference type="InterPro" id="IPR036967">
    <property type="entry name" value="Ribosomal_uS11_sf"/>
</dbReference>
<dbReference type="NCBIfam" id="NF003698">
    <property type="entry name" value="PRK05309.1"/>
    <property type="match status" value="1"/>
</dbReference>
<dbReference type="NCBIfam" id="TIGR03632">
    <property type="entry name" value="uS11_bact"/>
    <property type="match status" value="1"/>
</dbReference>
<dbReference type="PANTHER" id="PTHR11759">
    <property type="entry name" value="40S RIBOSOMAL PROTEIN S14/30S RIBOSOMAL PROTEIN S11"/>
    <property type="match status" value="1"/>
</dbReference>
<dbReference type="Pfam" id="PF00411">
    <property type="entry name" value="Ribosomal_S11"/>
    <property type="match status" value="1"/>
</dbReference>
<dbReference type="PIRSF" id="PIRSF002131">
    <property type="entry name" value="Ribosomal_S11"/>
    <property type="match status" value="1"/>
</dbReference>
<dbReference type="SUPFAM" id="SSF53137">
    <property type="entry name" value="Translational machinery components"/>
    <property type="match status" value="1"/>
</dbReference>
<dbReference type="PROSITE" id="PS00054">
    <property type="entry name" value="RIBOSOMAL_S11"/>
    <property type="match status" value="1"/>
</dbReference>
<evidence type="ECO:0000255" key="1">
    <source>
        <dbReference type="HAMAP-Rule" id="MF_01310"/>
    </source>
</evidence>
<evidence type="ECO:0000305" key="2"/>
<organism>
    <name type="scientific">Geobacillus thermodenitrificans (strain NG80-2)</name>
    <dbReference type="NCBI Taxonomy" id="420246"/>
    <lineage>
        <taxon>Bacteria</taxon>
        <taxon>Bacillati</taxon>
        <taxon>Bacillota</taxon>
        <taxon>Bacilli</taxon>
        <taxon>Bacillales</taxon>
        <taxon>Anoxybacillaceae</taxon>
        <taxon>Geobacillus</taxon>
    </lineage>
</organism>
<protein>
    <recommendedName>
        <fullName evidence="1">Small ribosomal subunit protein uS11</fullName>
    </recommendedName>
    <alternativeName>
        <fullName evidence="2">30S ribosomal protein S11</fullName>
    </alternativeName>
</protein>
<keyword id="KW-0687">Ribonucleoprotein</keyword>
<keyword id="KW-0689">Ribosomal protein</keyword>
<keyword id="KW-0694">RNA-binding</keyword>
<keyword id="KW-0699">rRNA-binding</keyword>
<reference key="1">
    <citation type="journal article" date="2007" name="Proc. Natl. Acad. Sci. U.S.A.">
        <title>Genome and proteome of long-chain alkane degrading Geobacillus thermodenitrificans NG80-2 isolated from a deep-subsurface oil reservoir.</title>
        <authorList>
            <person name="Feng L."/>
            <person name="Wang W."/>
            <person name="Cheng J."/>
            <person name="Ren Y."/>
            <person name="Zhao G."/>
            <person name="Gao C."/>
            <person name="Tang Y."/>
            <person name="Liu X."/>
            <person name="Han W."/>
            <person name="Peng X."/>
            <person name="Liu R."/>
            <person name="Wang L."/>
        </authorList>
    </citation>
    <scope>NUCLEOTIDE SEQUENCE [LARGE SCALE GENOMIC DNA]</scope>
    <source>
        <strain>NG80-2</strain>
    </source>
</reference>
<proteinExistence type="inferred from homology"/>
<name>RS11_GEOTN</name>
<accession>A4IJL3</accession>
<comment type="function">
    <text evidence="1">Located on the platform of the 30S subunit, it bridges several disparate RNA helices of the 16S rRNA. Forms part of the Shine-Dalgarno cleft in the 70S ribosome.</text>
</comment>
<comment type="subunit">
    <text evidence="1">Part of the 30S ribosomal subunit. Interacts with proteins S7 and S18. Binds to IF-3.</text>
</comment>
<comment type="similarity">
    <text evidence="1">Belongs to the universal ribosomal protein uS11 family.</text>
</comment>
<sequence>MARRTNTRKRRVRKNIDTGIAHIRSTFNNTIVTITDVHGNAIAWSSAGALGFKGSRKSTPFAAQMAAEAAAKASMEHGMKTVEVNVKGPGAGREAAIRALQAAGLEITAIKDVTPIPHNGCRPPKRRRV</sequence>